<keyword id="KW-0025">Alternative splicing</keyword>
<keyword id="KW-1003">Cell membrane</keyword>
<keyword id="KW-0225">Disease variant</keyword>
<keyword id="KW-0325">Glycoprotein</keyword>
<keyword id="KW-0472">Membrane</keyword>
<keyword id="KW-1013">Microphthalmia</keyword>
<keyword id="KW-0597">Phosphoprotein</keyword>
<keyword id="KW-1267">Proteomics identification</keyword>
<keyword id="KW-0675">Receptor</keyword>
<keyword id="KW-1185">Reference proteome</keyword>
<keyword id="KW-0683">Retinol-binding</keyword>
<keyword id="KW-0812">Transmembrane</keyword>
<keyword id="KW-1133">Transmembrane helix</keyword>
<keyword id="KW-0813">Transport</keyword>
<keyword id="KW-0845">Vitamin A</keyword>
<protein>
    <recommendedName>
        <fullName>Receptor for retinol uptake STRA6</fullName>
    </recommendedName>
    <alternativeName>
        <fullName evidence="24 26">Retinol-binding protein receptor STRA6</fullName>
    </alternativeName>
    <alternativeName>
        <fullName>Stimulated by retinoic acid gene 6 protein homolog</fullName>
    </alternativeName>
</protein>
<gene>
    <name type="primary">STRA6</name>
    <name type="ORF">PP14296</name>
    <name type="ORF">UNQ3126/PRO10282/PRO19578</name>
</gene>
<feature type="chain" id="PRO_0000311228" description="Receptor for retinol uptake STRA6">
    <location>
        <begin position="1"/>
        <end position="667"/>
    </location>
</feature>
<feature type="topological domain" description="Extracellular" evidence="1">
    <location>
        <begin position="1"/>
        <end position="50"/>
    </location>
</feature>
<feature type="transmembrane region" description="Helical" evidence="1">
    <location>
        <begin position="51"/>
        <end position="71"/>
    </location>
</feature>
<feature type="topological domain" description="Cytoplasmic" evidence="1">
    <location>
        <begin position="72"/>
        <end position="100"/>
    </location>
</feature>
<feature type="transmembrane region" description="Helical" evidence="1">
    <location>
        <begin position="101"/>
        <end position="121"/>
    </location>
</feature>
<feature type="topological domain" description="Extracellular" evidence="1">
    <location>
        <begin position="122"/>
        <end position="144"/>
    </location>
</feature>
<feature type="transmembrane region" description="Helical" evidence="1">
    <location>
        <begin position="145"/>
        <end position="165"/>
    </location>
</feature>
<feature type="topological domain" description="Cytoplasmic" evidence="1">
    <location>
        <begin position="166"/>
        <end position="168"/>
    </location>
</feature>
<feature type="transmembrane region" description="Helical" evidence="1">
    <location>
        <begin position="169"/>
        <end position="189"/>
    </location>
</feature>
<feature type="topological domain" description="Extracellular" evidence="1">
    <location>
        <begin position="190"/>
        <end position="205"/>
    </location>
</feature>
<feature type="transmembrane region" description="Helical" evidence="1">
    <location>
        <begin position="206"/>
        <end position="226"/>
    </location>
</feature>
<feature type="topological domain" description="Cytoplasmic" evidence="1">
    <location>
        <begin position="227"/>
        <end position="295"/>
    </location>
</feature>
<feature type="transmembrane region" description="Helical" evidence="1">
    <location>
        <begin position="296"/>
        <end position="316"/>
    </location>
</feature>
<feature type="topological domain" description="Extracellular" evidence="1">
    <location>
        <begin position="317"/>
        <end position="367"/>
    </location>
</feature>
<feature type="transmembrane region" description="Helical" evidence="1">
    <location>
        <begin position="368"/>
        <end position="388"/>
    </location>
</feature>
<feature type="topological domain" description="Cytoplasmic" evidence="1">
    <location>
        <begin position="389"/>
        <end position="422"/>
    </location>
</feature>
<feature type="transmembrane region" description="Helical" evidence="1">
    <location>
        <begin position="423"/>
        <end position="443"/>
    </location>
</feature>
<feature type="topological domain" description="Extracellular" evidence="1">
    <location>
        <begin position="444"/>
        <end position="473"/>
    </location>
</feature>
<feature type="transmembrane region" description="Helical" evidence="1">
    <location>
        <begin position="474"/>
        <end position="494"/>
    </location>
</feature>
<feature type="topological domain" description="Cytoplasmic" evidence="1">
    <location>
        <begin position="495"/>
        <end position="509"/>
    </location>
</feature>
<feature type="intramembrane region" description="Helical" evidence="1">
    <location>
        <begin position="510"/>
        <end position="547"/>
    </location>
</feature>
<feature type="topological domain" description="Cytoplasmic" evidence="1">
    <location>
        <begin position="548"/>
        <end position="667"/>
    </location>
</feature>
<feature type="region of interest" description="Disordered" evidence="4">
    <location>
        <begin position="1"/>
        <end position="20"/>
    </location>
</feature>
<feature type="region of interest" description="Interaction with RBP1" evidence="18">
    <location>
        <begin position="235"/>
        <end position="293"/>
    </location>
</feature>
<feature type="compositionally biased region" description="Polar residues" evidence="4">
    <location>
        <begin position="1"/>
        <end position="13"/>
    </location>
</feature>
<feature type="modified residue" description="Phosphotyrosine" evidence="16">
    <location>
        <position position="643"/>
    </location>
</feature>
<feature type="glycosylation site" description="N-linked (GlcNAc...) asparagine" evidence="3">
    <location>
        <position position="8"/>
    </location>
</feature>
<feature type="splice variant" id="VSP_029437" description="In isoform 4." evidence="25">
    <original>M</original>
    <variation>MGGKGGGDTRGPVLFPCQLAQALSPRRAFPRELKEKGQRM</variation>
    <location>
        <position position="1"/>
    </location>
</feature>
<feature type="splice variant" id="VSP_046776" description="In isoform 5." evidence="22">
    <original>M</original>
    <variation>MQIRLLRAELVVPLWQFIRQWPPGSDGWGQMEEKGQRM</variation>
    <location>
        <position position="1"/>
    </location>
</feature>
<feature type="splice variant" id="VSP_047497" description="In isoform 6." evidence="22">
    <original>M</original>
    <variation>MDSQGDWAAQEKGQRM</variation>
    <location>
        <position position="1"/>
    </location>
</feature>
<feature type="splice variant" id="VSP_029438" description="In isoform 3." evidence="20 21">
    <location>
        <begin position="89"/>
        <end position="97"/>
    </location>
</feature>
<feature type="splice variant" id="VSP_029439" description="In isoform 2." evidence="23">
    <original>AWKILGLFYYAALYYPLAACATAGHTAAHLLGSTLSWAHLGVQVWQRAECPQVPKIYKYYSLLASLPLLLGLGFLSLWYPVQLVRSFSRRTGAGSKGLQSSYSEEYLRNLLCRKKLGSSYHTSKHGFLSWARVCLRHCIYTPQPGFHLPLKLVLSATLTGTAIYQVALLLLVGVVPTIQKVRAGVTTDVSYLLAGFGIVLSEDKQEVVELVKHHLWALEVCYISALVLSCLLTFLVLMRSLVTHRTNLRALHRGAALDLSPLHRSPHPSRQAIFCWMSFSAYQTAFICLGLLVQQIIFFLGTTALAFLVLMPVLHGRNLLLFRSLESSWPFWLTLALAVILQNMAAHWVFLETHDGHPQLTNRRVLYAATFLLFPLNVLVGAMVATWRVLLSALYNAIHLGQMDLSLLPPRAATLDPGYYTYRNFLKIEVSQSHPAMTAFCSLLLQAQSLLPRTMAAPQDSLRPGEEDEGMQLLQTKDSMAKGARPGASRGRARWGLAYTLLHNPTLQVFRKTALLGANGAQP</original>
    <variation>NLPKITELRLVRAWI</variation>
    <location>
        <begin position="145"/>
        <end position="667"/>
    </location>
</feature>
<feature type="sequence variant" id="VAR_037168" description="In MCOPS9; dbSNP:rs118203961." evidence="11">
    <original>P</original>
    <variation>L</variation>
    <location>
        <position position="90"/>
    </location>
</feature>
<feature type="sequence variant" id="VAR_060203" description="In anophthalmia/microphthalmia; dbSNP:rs909629751." evidence="14">
    <original>G</original>
    <variation>E</variation>
    <location>
        <position position="217"/>
    </location>
</feature>
<feature type="sequence variant" id="VAR_037169" description="In MCOPS9; dbSNP:rs118203958." evidence="11">
    <original>P</original>
    <variation>L</variation>
    <location>
        <position position="293"/>
    </location>
</feature>
<feature type="sequence variant" id="VAR_066849" description="In MCOPS9; also found in a family with isolated colobomatous microphthalmia; affects STRA6 cell surface expression and retinol uptake; requires 2 nucleotide substitutions; dbSNP:rs151341424." evidence="17">
    <original>G</original>
    <variation>K</variation>
    <location>
        <position position="304"/>
    </location>
</feature>
<feature type="sequence variant" id="VAR_037170" description="In MCOPS9; dbSNP:rs118203962." evidence="11">
    <original>T</original>
    <variation>P</variation>
    <location>
        <position position="321"/>
    </location>
</feature>
<feature type="sequence variant" id="VAR_037171" description="In dbSNP:rs17852249." evidence="9 10">
    <original>G</original>
    <variation>S</variation>
    <location>
        <position position="339"/>
    </location>
</feature>
<feature type="sequence variant" id="VAR_060204" description="In anophthalmia/microphthalmia; dbSNP:rs869025269." evidence="15">
    <original>Q</original>
    <variation>R</variation>
    <location>
        <position position="438"/>
    </location>
</feature>
<feature type="sequence variant" id="VAR_037172" description="In dbSNP:rs11545567.">
    <original>L</original>
    <variation>F</variation>
    <location>
        <position position="517"/>
    </location>
</feature>
<feature type="sequence variant" id="VAR_037173" description="In dbSNP:rs736118." evidence="5 7 8">
    <original>M</original>
    <variation>I</variation>
    <location>
        <position position="527"/>
    </location>
</feature>
<feature type="sequence variant" id="VAR_060205" description="In anophthalmia/microphthalmia; dbSNP:rs144691445." evidence="15">
    <original>R</original>
    <variation>P</variation>
    <location>
        <position position="638"/>
    </location>
</feature>
<feature type="sequence variant" id="VAR_037174" description="In MCOPS9; loss of tyrosine phosphorylation; dbSNP:rs118203960." evidence="11 16">
    <original>T</original>
    <variation>M</variation>
    <location>
        <position position="644"/>
    </location>
</feature>
<feature type="sequence variant" id="VAR_037175" description="In MCOPS9; dbSNP:rs118203959." evidence="11">
    <original>R</original>
    <variation>C</variation>
    <location>
        <position position="655"/>
    </location>
</feature>
<feature type="mutagenesis site" description="Loss of interaction with RBP1." evidence="18">
    <original>L</original>
    <variation>A</variation>
    <location>
        <position position="255"/>
    </location>
</feature>
<feature type="mutagenesis site" description="Loss of tyrosine phosphorylation." evidence="16">
    <original>Y</original>
    <variation>F</variation>
    <location>
        <position position="643"/>
    </location>
</feature>
<feature type="sequence conflict" description="In Ref. 4; BAH12965." evidence="27" ref="4">
    <original>A</original>
    <variation>V</variation>
    <location>
        <position position="95"/>
    </location>
</feature>
<feature type="sequence conflict" description="In Ref. 3; CAD97655." evidence="27" ref="3">
    <original>R</original>
    <variation>Q</variation>
    <location>
        <position position="408"/>
    </location>
</feature>
<feature type="sequence conflict" description="In Ref. 4; BAH12965." evidence="27" ref="4">
    <original>I</original>
    <variation>M</variation>
    <location>
        <position position="417"/>
    </location>
</feature>
<feature type="sequence conflict" description="In Ref. 4; BAH13848." evidence="27" ref="4">
    <original>G</original>
    <variation>S</variation>
    <location>
        <position position="635"/>
    </location>
</feature>
<accession>Q9BX79</accession>
<accession>A8K7F1</accession>
<accession>B7Z5M9</accession>
<accession>B7Z862</accession>
<accession>D3DW54</accession>
<accession>F5GYI8</accession>
<accession>I3L1G8</accession>
<accession>Q6PJF8</accession>
<accession>Q71RB9</accession>
<accession>Q7L9G1</accession>
<accession>Q7Z3U9</accession>
<accession>Q8TB21</accession>
<accession>Q9BX78</accession>
<accession>Q9H9U8</accession>
<sequence length="667" mass="73503">MSSQPAGNQTSPGATEDYSYGSWYIDEPQGGEELQPEGEVPSCHTSIPPGLYHACLASLSILVLLLLAMLVRRRQLWPDCVRGRPGLPSPVDFLAGDRPRAVPAAVFMVLLSSLCLLLPDEDALPFLTLASAPSQDGKTEAPRGAWKILGLFYYAALYYPLAACATAGHTAAHLLGSTLSWAHLGVQVWQRAECPQVPKIYKYYSLLASLPLLLGLGFLSLWYPVQLVRSFSRRTGAGSKGLQSSYSEEYLRNLLCRKKLGSSYHTSKHGFLSWARVCLRHCIYTPQPGFHLPLKLVLSATLTGTAIYQVALLLLVGVVPTIQKVRAGVTTDVSYLLAGFGIVLSEDKQEVVELVKHHLWALEVCYISALVLSCLLTFLVLMRSLVTHRTNLRALHRGAALDLSPLHRSPHPSRQAIFCWMSFSAYQTAFICLGLLVQQIIFFLGTTALAFLVLMPVLHGRNLLLFRSLESSWPFWLTLALAVILQNMAAHWVFLETHDGHPQLTNRRVLYAATFLLFPLNVLVGAMVATWRVLLSALYNAIHLGQMDLSLLPPRAATLDPGYYTYRNFLKIEVSQSHPAMTAFCSLLLQAQSLLPRTMAAPQDSLRPGEEDEGMQLLQTKDSMAKGARPGASRGRARWGLAYTLLHNPTLQVFRKTALLGANGAQP</sequence>
<proteinExistence type="evidence at protein level"/>
<reference key="1">
    <citation type="journal article" date="2001" name="Cancer Res.">
        <title>Overexpression of the retinoic acid-responsive gene Stra6 in human cancers and its synergistic induction by Wnt-1 and retinoic acid.</title>
        <authorList>
            <person name="Szeto W."/>
            <person name="Jiang W."/>
            <person name="Tice D.A."/>
            <person name="Rubinfeld B."/>
            <person name="Hollingshead P.G."/>
            <person name="Fong S.E."/>
            <person name="Dugger D.L."/>
            <person name="Pham T."/>
            <person name="Yansura D.G."/>
            <person name="Wong T.A."/>
            <person name="Grimaldi J.C."/>
            <person name="Corpuz R.T."/>
            <person name="Singh J.S."/>
            <person name="Frantz G.D."/>
            <person name="Devaux B."/>
            <person name="Crowley C.W."/>
            <person name="Schwall R.H."/>
            <person name="Eberhard D.A."/>
            <person name="Rastelli L."/>
            <person name="Polakis P."/>
            <person name="Pennica D."/>
        </authorList>
    </citation>
    <scope>NUCLEOTIDE SEQUENCE [MRNA] (ISOFORMS 1 AND 3)</scope>
    <scope>INDUCTION</scope>
    <scope>VARIANT ILE-527</scope>
</reference>
<reference key="2">
    <citation type="journal article" date="2003" name="Genome Res.">
        <title>The secreted protein discovery initiative (SPDI), a large-scale effort to identify novel human secreted and transmembrane proteins: a bioinformatics assessment.</title>
        <authorList>
            <person name="Clark H.F."/>
            <person name="Gurney A.L."/>
            <person name="Abaya E."/>
            <person name="Baker K."/>
            <person name="Baldwin D.T."/>
            <person name="Brush J."/>
            <person name="Chen J."/>
            <person name="Chow B."/>
            <person name="Chui C."/>
            <person name="Crowley C."/>
            <person name="Currell B."/>
            <person name="Deuel B."/>
            <person name="Dowd P."/>
            <person name="Eaton D."/>
            <person name="Foster J.S."/>
            <person name="Grimaldi C."/>
            <person name="Gu Q."/>
            <person name="Hass P.E."/>
            <person name="Heldens S."/>
            <person name="Huang A."/>
            <person name="Kim H.S."/>
            <person name="Klimowski L."/>
            <person name="Jin Y."/>
            <person name="Johnson S."/>
            <person name="Lee J."/>
            <person name="Lewis L."/>
            <person name="Liao D."/>
            <person name="Mark M.R."/>
            <person name="Robbie E."/>
            <person name="Sanchez C."/>
            <person name="Schoenfeld J."/>
            <person name="Seshagiri S."/>
            <person name="Simmons L."/>
            <person name="Singh J."/>
            <person name="Smith V."/>
            <person name="Stinson J."/>
            <person name="Vagts A."/>
            <person name="Vandlen R.L."/>
            <person name="Watanabe C."/>
            <person name="Wieand D."/>
            <person name="Woods K."/>
            <person name="Xie M.-H."/>
            <person name="Yansura D.G."/>
            <person name="Yi S."/>
            <person name="Yu G."/>
            <person name="Yuan J."/>
            <person name="Zhang M."/>
            <person name="Zhang Z."/>
            <person name="Goddard A.D."/>
            <person name="Wood W.I."/>
            <person name="Godowski P.J."/>
            <person name="Gray A.M."/>
        </authorList>
    </citation>
    <scope>NUCLEOTIDE SEQUENCE [LARGE SCALE MRNA] (ISOFORMS 1 AND 3)</scope>
    <scope>VARIANT ILE-527</scope>
</reference>
<reference key="3">
    <citation type="journal article" date="2007" name="BMC Genomics">
        <title>The full-ORF clone resource of the German cDNA consortium.</title>
        <authorList>
            <person name="Bechtel S."/>
            <person name="Rosenfelder H."/>
            <person name="Duda A."/>
            <person name="Schmidt C.P."/>
            <person name="Ernst U."/>
            <person name="Wellenreuther R."/>
            <person name="Mehrle A."/>
            <person name="Schuster C."/>
            <person name="Bahr A."/>
            <person name="Bloecker H."/>
            <person name="Heubner D."/>
            <person name="Hoerlein A."/>
            <person name="Michel G."/>
            <person name="Wedler H."/>
            <person name="Koehrer K."/>
            <person name="Ottenwaelder B."/>
            <person name="Poustka A."/>
            <person name="Wiemann S."/>
            <person name="Schupp I."/>
        </authorList>
    </citation>
    <scope>NUCLEOTIDE SEQUENCE [LARGE SCALE MRNA] (ISOFORM 4)</scope>
    <source>
        <tissue>Endometrium</tissue>
    </source>
</reference>
<reference key="4">
    <citation type="journal article" date="2004" name="Nat. Genet.">
        <title>Complete sequencing and characterization of 21,243 full-length human cDNAs.</title>
        <authorList>
            <person name="Ota T."/>
            <person name="Suzuki Y."/>
            <person name="Nishikawa T."/>
            <person name="Otsuki T."/>
            <person name="Sugiyama T."/>
            <person name="Irie R."/>
            <person name="Wakamatsu A."/>
            <person name="Hayashi K."/>
            <person name="Sato H."/>
            <person name="Nagai K."/>
            <person name="Kimura K."/>
            <person name="Makita H."/>
            <person name="Sekine M."/>
            <person name="Obayashi M."/>
            <person name="Nishi T."/>
            <person name="Shibahara T."/>
            <person name="Tanaka T."/>
            <person name="Ishii S."/>
            <person name="Yamamoto J."/>
            <person name="Saito K."/>
            <person name="Kawai Y."/>
            <person name="Isono Y."/>
            <person name="Nakamura Y."/>
            <person name="Nagahari K."/>
            <person name="Murakami K."/>
            <person name="Yasuda T."/>
            <person name="Iwayanagi T."/>
            <person name="Wagatsuma M."/>
            <person name="Shiratori A."/>
            <person name="Sudo H."/>
            <person name="Hosoiri T."/>
            <person name="Kaku Y."/>
            <person name="Kodaira H."/>
            <person name="Kondo H."/>
            <person name="Sugawara M."/>
            <person name="Takahashi M."/>
            <person name="Kanda K."/>
            <person name="Yokoi T."/>
            <person name="Furuya T."/>
            <person name="Kikkawa E."/>
            <person name="Omura Y."/>
            <person name="Abe K."/>
            <person name="Kamihara K."/>
            <person name="Katsuta N."/>
            <person name="Sato K."/>
            <person name="Tanikawa M."/>
            <person name="Yamazaki M."/>
            <person name="Ninomiya K."/>
            <person name="Ishibashi T."/>
            <person name="Yamashita H."/>
            <person name="Murakawa K."/>
            <person name="Fujimori K."/>
            <person name="Tanai H."/>
            <person name="Kimata M."/>
            <person name="Watanabe M."/>
            <person name="Hiraoka S."/>
            <person name="Chiba Y."/>
            <person name="Ishida S."/>
            <person name="Ono Y."/>
            <person name="Takiguchi S."/>
            <person name="Watanabe S."/>
            <person name="Yosida M."/>
            <person name="Hotuta T."/>
            <person name="Kusano J."/>
            <person name="Kanehori K."/>
            <person name="Takahashi-Fujii A."/>
            <person name="Hara H."/>
            <person name="Tanase T.-O."/>
            <person name="Nomura Y."/>
            <person name="Togiya S."/>
            <person name="Komai F."/>
            <person name="Hara R."/>
            <person name="Takeuchi K."/>
            <person name="Arita M."/>
            <person name="Imose N."/>
            <person name="Musashino K."/>
            <person name="Yuuki H."/>
            <person name="Oshima A."/>
            <person name="Sasaki N."/>
            <person name="Aotsuka S."/>
            <person name="Yoshikawa Y."/>
            <person name="Matsunawa H."/>
            <person name="Ichihara T."/>
            <person name="Shiohata N."/>
            <person name="Sano S."/>
            <person name="Moriya S."/>
            <person name="Momiyama H."/>
            <person name="Satoh N."/>
            <person name="Takami S."/>
            <person name="Terashima Y."/>
            <person name="Suzuki O."/>
            <person name="Nakagawa S."/>
            <person name="Senoh A."/>
            <person name="Mizoguchi H."/>
            <person name="Goto Y."/>
            <person name="Shimizu F."/>
            <person name="Wakebe H."/>
            <person name="Hishigaki H."/>
            <person name="Watanabe T."/>
            <person name="Sugiyama A."/>
            <person name="Takemoto M."/>
            <person name="Kawakami B."/>
            <person name="Yamazaki M."/>
            <person name="Watanabe K."/>
            <person name="Kumagai A."/>
            <person name="Itakura S."/>
            <person name="Fukuzumi Y."/>
            <person name="Fujimori Y."/>
            <person name="Komiyama M."/>
            <person name="Tashiro H."/>
            <person name="Tanigami A."/>
            <person name="Fujiwara T."/>
            <person name="Ono T."/>
            <person name="Yamada K."/>
            <person name="Fujii Y."/>
            <person name="Ozaki K."/>
            <person name="Hirao M."/>
            <person name="Ohmori Y."/>
            <person name="Kawabata A."/>
            <person name="Hikiji T."/>
            <person name="Kobatake N."/>
            <person name="Inagaki H."/>
            <person name="Ikema Y."/>
            <person name="Okamoto S."/>
            <person name="Okitani R."/>
            <person name="Kawakami T."/>
            <person name="Noguchi S."/>
            <person name="Itoh T."/>
            <person name="Shigeta K."/>
            <person name="Senba T."/>
            <person name="Matsumura K."/>
            <person name="Nakajima Y."/>
            <person name="Mizuno T."/>
            <person name="Morinaga M."/>
            <person name="Sasaki M."/>
            <person name="Togashi T."/>
            <person name="Oyama M."/>
            <person name="Hata H."/>
            <person name="Watanabe M."/>
            <person name="Komatsu T."/>
            <person name="Mizushima-Sugano J."/>
            <person name="Satoh T."/>
            <person name="Shirai Y."/>
            <person name="Takahashi Y."/>
            <person name="Nakagawa K."/>
            <person name="Okumura K."/>
            <person name="Nagase T."/>
            <person name="Nomura N."/>
            <person name="Kikuchi H."/>
            <person name="Masuho Y."/>
            <person name="Yamashita R."/>
            <person name="Nakai K."/>
            <person name="Yada T."/>
            <person name="Nakamura Y."/>
            <person name="Ohara O."/>
            <person name="Isogai T."/>
            <person name="Sugano S."/>
        </authorList>
    </citation>
    <scope>NUCLEOTIDE SEQUENCE [LARGE SCALE MRNA] (ISOFORMS 1; 5 AND 6)</scope>
    <scope>VARIANT ILE-527</scope>
    <source>
        <tissue>Testis</tissue>
    </source>
</reference>
<reference key="5">
    <citation type="journal article" date="2004" name="Proc. Natl. Acad. Sci. U.S.A.">
        <title>Large-scale cDNA transfection screening for genes related to cancer development and progression.</title>
        <authorList>
            <person name="Wan D."/>
            <person name="Gong Y."/>
            <person name="Qin W."/>
            <person name="Zhang P."/>
            <person name="Li J."/>
            <person name="Wei L."/>
            <person name="Zhou X."/>
            <person name="Li H."/>
            <person name="Qiu X."/>
            <person name="Zhong F."/>
            <person name="He L."/>
            <person name="Yu J."/>
            <person name="Yao G."/>
            <person name="Jiang H."/>
            <person name="Qian L."/>
            <person name="Yu Y."/>
            <person name="Shu H."/>
            <person name="Chen X."/>
            <person name="Xu H."/>
            <person name="Guo M."/>
            <person name="Pan Z."/>
            <person name="Chen Y."/>
            <person name="Ge C."/>
            <person name="Yang S."/>
            <person name="Gu J."/>
        </authorList>
    </citation>
    <scope>NUCLEOTIDE SEQUENCE [LARGE SCALE MRNA] (ISOFORM 1)</scope>
    <scope>VARIANT SER-339</scope>
</reference>
<reference key="6">
    <citation type="journal article" date="2006" name="Nature">
        <title>Analysis of the DNA sequence and duplication history of human chromosome 15.</title>
        <authorList>
            <person name="Zody M.C."/>
            <person name="Garber M."/>
            <person name="Sharpe T."/>
            <person name="Young S.K."/>
            <person name="Rowen L."/>
            <person name="O'Neill K."/>
            <person name="Whittaker C.A."/>
            <person name="Kamal M."/>
            <person name="Chang J.L."/>
            <person name="Cuomo C.A."/>
            <person name="Dewar K."/>
            <person name="FitzGerald M.G."/>
            <person name="Kodira C.D."/>
            <person name="Madan A."/>
            <person name="Qin S."/>
            <person name="Yang X."/>
            <person name="Abbasi N."/>
            <person name="Abouelleil A."/>
            <person name="Arachchi H.M."/>
            <person name="Baradarani L."/>
            <person name="Birditt B."/>
            <person name="Bloom S."/>
            <person name="Bloom T."/>
            <person name="Borowsky M.L."/>
            <person name="Burke J."/>
            <person name="Butler J."/>
            <person name="Cook A."/>
            <person name="DeArellano K."/>
            <person name="DeCaprio D."/>
            <person name="Dorris L. III"/>
            <person name="Dors M."/>
            <person name="Eichler E.E."/>
            <person name="Engels R."/>
            <person name="Fahey J."/>
            <person name="Fleetwood P."/>
            <person name="Friedman C."/>
            <person name="Gearin G."/>
            <person name="Hall J.L."/>
            <person name="Hensley G."/>
            <person name="Johnson E."/>
            <person name="Jones C."/>
            <person name="Kamat A."/>
            <person name="Kaur A."/>
            <person name="Locke D.P."/>
            <person name="Madan A."/>
            <person name="Munson G."/>
            <person name="Jaffe D.B."/>
            <person name="Lui A."/>
            <person name="Macdonald P."/>
            <person name="Mauceli E."/>
            <person name="Naylor J.W."/>
            <person name="Nesbitt R."/>
            <person name="Nicol R."/>
            <person name="O'Leary S.B."/>
            <person name="Ratcliffe A."/>
            <person name="Rounsley S."/>
            <person name="She X."/>
            <person name="Sneddon K.M.B."/>
            <person name="Stewart S."/>
            <person name="Sougnez C."/>
            <person name="Stone S.M."/>
            <person name="Topham K."/>
            <person name="Vincent D."/>
            <person name="Wang S."/>
            <person name="Zimmer A.R."/>
            <person name="Birren B.W."/>
            <person name="Hood L."/>
            <person name="Lander E.S."/>
            <person name="Nusbaum C."/>
        </authorList>
    </citation>
    <scope>NUCLEOTIDE SEQUENCE [LARGE SCALE GENOMIC DNA]</scope>
</reference>
<reference key="7">
    <citation type="submission" date="2005-09" db="EMBL/GenBank/DDBJ databases">
        <authorList>
            <person name="Mural R.J."/>
            <person name="Istrail S."/>
            <person name="Sutton G.G."/>
            <person name="Florea L."/>
            <person name="Halpern A.L."/>
            <person name="Mobarry C.M."/>
            <person name="Lippert R."/>
            <person name="Walenz B."/>
            <person name="Shatkay H."/>
            <person name="Dew I."/>
            <person name="Miller J.R."/>
            <person name="Flanigan M.J."/>
            <person name="Edwards N.J."/>
            <person name="Bolanos R."/>
            <person name="Fasulo D."/>
            <person name="Halldorsson B.V."/>
            <person name="Hannenhalli S."/>
            <person name="Turner R."/>
            <person name="Yooseph S."/>
            <person name="Lu F."/>
            <person name="Nusskern D.R."/>
            <person name="Shue B.C."/>
            <person name="Zheng X.H."/>
            <person name="Zhong F."/>
            <person name="Delcher A.L."/>
            <person name="Huson D.H."/>
            <person name="Kravitz S.A."/>
            <person name="Mouchard L."/>
            <person name="Reinert K."/>
            <person name="Remington K.A."/>
            <person name="Clark A.G."/>
            <person name="Waterman M.S."/>
            <person name="Eichler E.E."/>
            <person name="Adams M.D."/>
            <person name="Hunkapiller M.W."/>
            <person name="Myers E.W."/>
            <person name="Venter J.C."/>
        </authorList>
    </citation>
    <scope>NUCLEOTIDE SEQUENCE [LARGE SCALE GENOMIC DNA]</scope>
</reference>
<reference key="8">
    <citation type="journal article" date="2004" name="Genome Res.">
        <title>The status, quality, and expansion of the NIH full-length cDNA project: the Mammalian Gene Collection (MGC).</title>
        <authorList>
            <consortium name="The MGC Project Team"/>
        </authorList>
    </citation>
    <scope>NUCLEOTIDE SEQUENCE [LARGE SCALE MRNA] (ISOFORMS 1 AND 2)</scope>
    <scope>VARIANT SER-339</scope>
    <source>
        <tissue>Brain</tissue>
        <tissue>Muscle</tissue>
    </source>
</reference>
<reference key="9">
    <citation type="journal article" date="1998" name="J. Biol. Chem.">
        <title>The transfer of retinol from serum retinol-binding protein to cellular retinol-binding protein is mediated by a membrane receptor.</title>
        <authorList>
            <person name="Sundaram M."/>
            <person name="Sivaprasadarao A."/>
            <person name="DeSousa M.M."/>
            <person name="Findlay J.B."/>
        </authorList>
    </citation>
    <scope>FUNCTION</scope>
    <scope>SUBCELLULAR LOCATION</scope>
</reference>
<reference key="10">
    <citation type="journal article" date="2002" name="J. Biol. Chem.">
        <title>Synergistic induction of tumor antigens by Wnt-1 signaling and retinoic acid revealed by gene expression profiling.</title>
        <authorList>
            <person name="Tice D.A."/>
            <person name="Szeto W."/>
            <person name="Soloviev I."/>
            <person name="Rubinfeld B."/>
            <person name="Fong S.E."/>
            <person name="Dugger D.L."/>
            <person name="Winer J."/>
            <person name="Williams P.M."/>
            <person name="Wieand D."/>
            <person name="Smith V."/>
            <person name="Schwall R.H."/>
            <person name="Pennica D."/>
            <person name="Polakis P."/>
        </authorList>
    </citation>
    <scope>INDUCTION</scope>
</reference>
<reference key="11">
    <citation type="journal article" date="2008" name="Cell Metab.">
        <title>RBP4 disrupts vitamin A uptake homeostasis in a STRA6-deficient animal model for Matthew-Wood syndrome.</title>
        <authorList>
            <person name="Isken A."/>
            <person name="Golczak M."/>
            <person name="Oberhauser V."/>
            <person name="Hunzelmann S."/>
            <person name="Driever W."/>
            <person name="Imanishi Y."/>
            <person name="Palczewski K."/>
            <person name="von Lintig J."/>
        </authorList>
    </citation>
    <scope>FUNCTION</scope>
    <scope>SUBCELLULAR LOCATION</scope>
</reference>
<reference key="12">
    <citation type="journal article" date="2011" name="Proc. Natl. Acad. Sci. U.S.A.">
        <title>Signaling by vitamin A and retinol-binding protein regulates gene expression to inhibit insulin responses.</title>
        <authorList>
            <person name="Berry D.C."/>
            <person name="Jin H."/>
            <person name="Majumdar A."/>
            <person name="Noy N."/>
        </authorList>
    </citation>
    <scope>FUNCTION</scope>
    <scope>INTERACTION WITH JAK2 AND STAT5</scope>
    <scope>PHOSPHORYLATION AT TYR-643</scope>
    <scope>MUTAGENESIS OF TYR-643</scope>
    <scope>CHARACTERIZATION OF VARIANT MCOPS9 MET-644</scope>
</reference>
<reference key="13">
    <citation type="journal article" date="2012" name="Mol. Cell. Biol.">
        <title>Cross talk between signaling and vitamin A transport by the retinol-binding protein receptor STRA6.</title>
        <authorList>
            <person name="Berry D.C."/>
            <person name="O'Byrne S.M."/>
            <person name="Vreeland A.C."/>
            <person name="Blaner W.S."/>
            <person name="Noy N."/>
        </authorList>
    </citation>
    <scope>FUNCTION</scope>
    <scope>SUBCELLULAR LOCATION</scope>
    <scope>INTERACTION WITH RBP1 AND RBP4</scope>
    <scope>MUTAGENESIS OF LEU-255</scope>
    <scope>PHOSPHORYLATION</scope>
</reference>
<reference key="14">
    <citation type="journal article" date="2007" name="Am. J. Hum. Genet.">
        <title>Matthew-Wood syndrome is caused by truncating mutations in the retinol-binding protein receptor gene STRA6.</title>
        <authorList>
            <person name="Golzio C."/>
            <person name="Martinovic-Bouriel J."/>
            <person name="Thomas S."/>
            <person name="Mougou-Zrelli S."/>
            <person name="Grattagliano-Bessieres B."/>
            <person name="Bonniere M."/>
            <person name="Delahaye S."/>
            <person name="Munnich A."/>
            <person name="Encha-Razavi F."/>
            <person name="Lyonnet S."/>
            <person name="Vekemans M."/>
            <person name="Attie-Bitach T."/>
            <person name="Etchevers H.C."/>
        </authorList>
    </citation>
    <scope>INVOLVEMENT IN MCOPS9</scope>
</reference>
<reference key="15">
    <citation type="journal article" date="2007" name="Am. J. Hum. Genet.">
        <title>Mutations in STRA6 cause a broad spectrum of malformations including anophthalmia, congenital heart defects, diaphragmatic hernia, alveolar capillary dysplasia, lung hypoplasia, and mental retardation.</title>
        <authorList>
            <person name="Pasutto F."/>
            <person name="Sticht H."/>
            <person name="Hammersen G."/>
            <person name="Gillessen-Kaesbach G."/>
            <person name="FitzPatrick D.R."/>
            <person name="Nuernberg G."/>
            <person name="Brasch F."/>
            <person name="Schirmer-Zimmermann H."/>
            <person name="Tolmie J.L."/>
            <person name="Chitayat D."/>
            <person name="Houge G."/>
            <person name="Fernandez-Martinez L."/>
            <person name="Keating S."/>
            <person name="Mortier G."/>
            <person name="Hennekam R.C.M."/>
            <person name="von der Wense A."/>
            <person name="Slavotinek A."/>
            <person name="Meinecke P."/>
            <person name="Bitoun P."/>
            <person name="Becker C."/>
            <person name="Nuernberg P."/>
            <person name="Reis A."/>
            <person name="Rauch A."/>
        </authorList>
    </citation>
    <scope>VARIANTS MCOPS9 LEU-90; LEU-293; PRO-321; MET-644 AND CYS-655</scope>
    <scope>TISSUE SPECIFICITY</scope>
</reference>
<reference key="16">
    <citation type="journal article" date="2008" name="Mol. Vis.">
        <title>Identification of STRA6 and SKI sequence variants in patients with anophthalmia/microphthalmia.</title>
        <authorList>
            <person name="White T."/>
            <person name="Lu T."/>
            <person name="Metlapally R."/>
            <person name="Katowitz J."/>
            <person name="Kherani F."/>
            <person name="Wang T.-Y."/>
            <person name="Tran-Viet K.-N."/>
            <person name="Young T.L."/>
        </authorList>
    </citation>
    <scope>VARIANT ANOPHTHALMIA/MICROPHTHALMIA GLU-217</scope>
</reference>
<reference key="17">
    <citation type="journal article" date="2009" name="Hum. Mutat.">
        <title>Phenotypic spectrum of STRA6 mutations: from Matthew-Wood syndrome to non-lethal anophthalmia.</title>
        <authorList>
            <person name="Chassaing N."/>
            <person name="Golzio C."/>
            <person name="Odent S."/>
            <person name="Lequeux L."/>
            <person name="Vigouroux A."/>
            <person name="Martinovic-Bouriel J."/>
            <person name="Tiziano F.D."/>
            <person name="Masini L."/>
            <person name="Piro F."/>
            <person name="Maragliano G."/>
            <person name="Delezoide A.-L."/>
            <person name="Attie-Bitach T."/>
            <person name="Manouvrier-Hanu S."/>
            <person name="Etchevers H.C."/>
            <person name="Calvas P."/>
        </authorList>
    </citation>
    <scope>VARIANTS ANOPHTHALMIA/MICROPHTHALMIA ARG-438 AND PRO-638</scope>
</reference>
<reference key="18">
    <citation type="journal article" date="2011" name="Hum. Mutat.">
        <title>First implication of STRA6 mutations in isolated anophthalmia, microphthalmia, and coloboma: A new dimension to the STRA6 phenotype.</title>
        <authorList>
            <person name="Casey J."/>
            <person name="Kawaguchi R."/>
            <person name="Morrissey M."/>
            <person name="Sun H."/>
            <person name="McGettigan P."/>
            <person name="Nielsen J.E."/>
            <person name="Conroy J."/>
            <person name="Regan R."/>
            <person name="Kenny E."/>
            <person name="Cormican P."/>
            <person name="Morris D.W."/>
            <person name="Tormey P."/>
            <person name="Ni Chroinin M."/>
            <person name="Kennedy B.N."/>
            <person name="Lynch S."/>
            <person name="Green A."/>
            <person name="Ennis S."/>
        </authorList>
    </citation>
    <scope>INVOLVEMENT IN ISOLATED COLOBOMATOUS MICROPHTHALMIA</scope>
    <scope>VARIANT MCOPS9 LYS-304</scope>
    <scope>CHARACTERIZATION OF VARIANT MCOPS9 LYS-304</scope>
    <scope>FUNCTION</scope>
    <scope>SUBCELLULAR LOCATION</scope>
</reference>
<name>STRA6_HUMAN</name>
<comment type="function">
    <text evidence="13 17 18 19 27">Functions as a retinol transporter. Accepts all-trans retinol from the extracellular retinol-binding protein RBP4, facilitates retinol transport across the cell membrane, and then transfers retinol to the cytoplasmic retinol-binding protein RBP1 (PubMed:18316031, PubMed:22665496, PubMed:9452451). Retinol uptake is enhanced by LRAT, an enzyme that converts retinol to all-trans retinyl esters, the storage forms of vitamin A (PubMed:18316031, PubMed:22665496). Contributes to the activation of a signaling cascade that depends on retinol transport and LRAT-dependent generation of retinol metabolites that then trigger activation of JAK2 and its target STAT5, and ultimately increase the expression of SOCS3 and inhibit cellular responses to insulin (PubMed:21368206, PubMed:22665496). Important for the homeostasis of vitamin A and its derivatives, such as retinoic acid (PubMed:18316031). STRA6-mediated transport is particularly important in the eye, and under conditions of dietary vitamin A deficiency (Probable). Does not transport retinoic acid (PubMed:18316031).</text>
</comment>
<comment type="subunit">
    <text evidence="1 16 18">Homodimer (By similarity). Interacts with JAK2 and STAT5 (PubMed:21368206). Interacts (via extracellular domains) with RBP4 (PubMed:22665496). Interacts (via cytoplasmic domains) with RBP1 (PubMed:22665496).</text>
</comment>
<comment type="interaction">
    <interactant intactId="EBI-12140683">
        <id>Q9BX79-6</id>
    </interactant>
    <interactant intactId="EBI-374781">
        <id>O76003</id>
        <label>GLRX3</label>
    </interactant>
    <organismsDiffer>false</organismsDiffer>
    <experiments>3</experiments>
</comment>
<comment type="interaction">
    <interactant intactId="EBI-12140683">
        <id>Q9BX79-6</id>
    </interactant>
    <interactant intactId="EBI-12012928">
        <id>P60371</id>
        <label>KRTAP10-6</label>
    </interactant>
    <organismsDiffer>false</organismsDiffer>
    <experiments>3</experiments>
</comment>
<comment type="interaction">
    <interactant intactId="EBI-12140683">
        <id>Q9BX79-6</id>
    </interactant>
    <interactant intactId="EBI-22311199">
        <id>Q3LI67</id>
        <label>KRTAP6-3</label>
    </interactant>
    <organismsDiffer>false</organismsDiffer>
    <experiments>3</experiments>
</comment>
<comment type="interaction">
    <interactant intactId="EBI-12140683">
        <id>Q9BX79-6</id>
    </interactant>
    <interactant intactId="EBI-11973993">
        <id>Q5TA81</id>
        <label>LCE2C</label>
    </interactant>
    <organismsDiffer>false</organismsDiffer>
    <experiments>3</experiments>
</comment>
<comment type="interaction">
    <interactant intactId="EBI-12140683">
        <id>Q9BX79-6</id>
    </interactant>
    <interactant intactId="EBI-1246238">
        <id>P17568</id>
        <label>NDUFB7</label>
    </interactant>
    <organismsDiffer>false</organismsDiffer>
    <experiments>3</experiments>
</comment>
<comment type="subcellular location">
    <subcellularLocation>
        <location evidence="13 17 19">Cell membrane</location>
        <topology evidence="27">Multi-pass membrane protein</topology>
    </subcellularLocation>
    <text evidence="2">In the retinal pigment epithelium localizes to the basolateral membrane.</text>
</comment>
<comment type="alternative products">
    <event type="alternative splicing"/>
    <isoform>
        <id>Q9BX79-1</id>
        <name>1</name>
        <sequence type="displayed"/>
    </isoform>
    <isoform>
        <id>Q9BX79-2</id>
        <name>2</name>
        <sequence type="described" ref="VSP_029439"/>
    </isoform>
    <isoform>
        <id>Q9BX79-3</id>
        <name>3</name>
        <sequence type="described" ref="VSP_029438"/>
    </isoform>
    <isoform>
        <id>Q9BX79-4</id>
        <name>4</name>
        <sequence type="described" ref="VSP_029437"/>
    </isoform>
    <isoform>
        <id>Q9BX79-5</id>
        <name>5</name>
        <sequence type="described" ref="VSP_046776"/>
    </isoform>
    <isoform>
        <id>Q9BX79-6</id>
        <name>6</name>
        <sequence type="described" ref="VSP_047497"/>
    </isoform>
</comment>
<comment type="tissue specificity">
    <text evidence="11">Broad expression. In adult eye expressed in sclera, retina, retinal pigment epithelium, and trabecular meshwork but not in choroid and iris.</text>
</comment>
<comment type="induction">
    <text evidence="5 6">Up-regulated in the colorectal cancer cell line WiDr by the administration of retinoic acid and in tumors with frequent defects in Wnt-1 signaling.</text>
</comment>
<comment type="domain">
    <text evidence="1 2">Contrary to predictions, contains nine transmembrane helices, with an extracellular N-terminus and a cytoplasmic C-terminus (By similarity). Besides, contains one long helix that dips into the membrane and then runs more or less parallel to the membrane surface (By similarity).</text>
</comment>
<comment type="PTM">
    <text evidence="16 18">Phosphorylated on tyrosine residues in response to RBP4 binding (PubMed:21368206, PubMed:22665496). Phosphorylation requires the presence of LRAT, suggesting it may be triggered by the uptake of retinol that is then metabolized within the cell to retinoids that function as signaling molecules (PubMed:22665496).</text>
</comment>
<comment type="disease" evidence="11 12 16 17">
    <disease id="DI-00767">
        <name>Microphthalmia, syndromic, 9</name>
        <acronym>MCOPS9</acronym>
        <description>A rare clinical entity including as main characteristics anophthalmia or severe microphthalmia, and pulmonary hypoplasia or aplasia. Microphthalmia is a disorder of eye formation, ranging from small size of a single eye to complete bilateral absence of ocular tissues (anophthalmia). In many cases, microphthalmia/anophthalmia occurs in association with syndromes that include non-ocular abnormalities.</description>
        <dbReference type="MIM" id="601186"/>
    </disease>
    <text>The disease is caused by variants affecting the gene represented in this entry.</text>
</comment>
<comment type="disease">
    <text evidence="17">Mutations in STRA6 may be a cause of isolated colobomatous microphthalmia, a disorder of the eye characterized by an abnormally small ocular globe.</text>
</comment>
<comment type="sequence caution" evidence="27">
    <conflict type="erroneous initiation">
        <sequence resource="EMBL-CDS" id="BAB14122"/>
    </conflict>
    <text>Truncated N-terminus.</text>
</comment>
<comment type="sequence caution" evidence="27">
    <conflict type="erroneous initiation">
        <sequence resource="EMBL-CDS" id="BAH13848"/>
    </conflict>
    <text>Extended N-terminus.</text>
</comment>
<comment type="sequence caution" evidence="27">
    <conflict type="erroneous initiation">
        <sequence resource="EMBL-CDS" id="CAD97655"/>
    </conflict>
    <text>Extended N-terminus.</text>
</comment>
<organism>
    <name type="scientific">Homo sapiens</name>
    <name type="common">Human</name>
    <dbReference type="NCBI Taxonomy" id="9606"/>
    <lineage>
        <taxon>Eukaryota</taxon>
        <taxon>Metazoa</taxon>
        <taxon>Chordata</taxon>
        <taxon>Craniata</taxon>
        <taxon>Vertebrata</taxon>
        <taxon>Euteleostomi</taxon>
        <taxon>Mammalia</taxon>
        <taxon>Eutheria</taxon>
        <taxon>Euarchontoglires</taxon>
        <taxon>Primates</taxon>
        <taxon>Haplorrhini</taxon>
        <taxon>Catarrhini</taxon>
        <taxon>Hominidae</taxon>
        <taxon>Homo</taxon>
    </lineage>
</organism>
<evidence type="ECO:0000250" key="1">
    <source>
        <dbReference type="UniProtKB" id="F1RAX4"/>
    </source>
</evidence>
<evidence type="ECO:0000250" key="2">
    <source>
        <dbReference type="UniProtKB" id="Q0V8E7"/>
    </source>
</evidence>
<evidence type="ECO:0000255" key="3"/>
<evidence type="ECO:0000256" key="4">
    <source>
        <dbReference type="SAM" id="MobiDB-lite"/>
    </source>
</evidence>
<evidence type="ECO:0000269" key="5">
    <source>
    </source>
</evidence>
<evidence type="ECO:0000269" key="6">
    <source>
    </source>
</evidence>
<evidence type="ECO:0000269" key="7">
    <source>
    </source>
</evidence>
<evidence type="ECO:0000269" key="8">
    <source>
    </source>
</evidence>
<evidence type="ECO:0000269" key="9">
    <source>
    </source>
</evidence>
<evidence type="ECO:0000269" key="10">
    <source>
    </source>
</evidence>
<evidence type="ECO:0000269" key="11">
    <source>
    </source>
</evidence>
<evidence type="ECO:0000269" key="12">
    <source>
    </source>
</evidence>
<evidence type="ECO:0000269" key="13">
    <source>
    </source>
</evidence>
<evidence type="ECO:0000269" key="14">
    <source>
    </source>
</evidence>
<evidence type="ECO:0000269" key="15">
    <source>
    </source>
</evidence>
<evidence type="ECO:0000269" key="16">
    <source>
    </source>
</evidence>
<evidence type="ECO:0000269" key="17">
    <source>
    </source>
</evidence>
<evidence type="ECO:0000269" key="18">
    <source>
    </source>
</evidence>
<evidence type="ECO:0000269" key="19">
    <source>
    </source>
</evidence>
<evidence type="ECO:0000303" key="20">
    <source>
    </source>
</evidence>
<evidence type="ECO:0000303" key="21">
    <source>
    </source>
</evidence>
<evidence type="ECO:0000303" key="22">
    <source>
    </source>
</evidence>
<evidence type="ECO:0000303" key="23">
    <source>
    </source>
</evidence>
<evidence type="ECO:0000303" key="24">
    <source>
    </source>
</evidence>
<evidence type="ECO:0000303" key="25">
    <source>
    </source>
</evidence>
<evidence type="ECO:0000303" key="26">
    <source>
    </source>
</evidence>
<evidence type="ECO:0000305" key="27"/>
<dbReference type="EMBL" id="AF352728">
    <property type="protein sequence ID" value="AAK30289.1"/>
    <property type="molecule type" value="mRNA"/>
</dbReference>
<dbReference type="EMBL" id="AF352729">
    <property type="protein sequence ID" value="AAK30290.1"/>
    <property type="molecule type" value="mRNA"/>
</dbReference>
<dbReference type="EMBL" id="AY358748">
    <property type="protein sequence ID" value="AAQ89108.1"/>
    <property type="molecule type" value="mRNA"/>
</dbReference>
<dbReference type="EMBL" id="AY359089">
    <property type="protein sequence ID" value="AAQ89447.1"/>
    <property type="molecule type" value="mRNA"/>
</dbReference>
<dbReference type="EMBL" id="BX537413">
    <property type="protein sequence ID" value="CAD97655.1"/>
    <property type="status" value="ALT_INIT"/>
    <property type="molecule type" value="mRNA"/>
</dbReference>
<dbReference type="EMBL" id="AK022603">
    <property type="protein sequence ID" value="BAB14122.1"/>
    <property type="status" value="ALT_INIT"/>
    <property type="molecule type" value="mRNA"/>
</dbReference>
<dbReference type="EMBL" id="AK291966">
    <property type="protein sequence ID" value="BAF84655.1"/>
    <property type="molecule type" value="mRNA"/>
</dbReference>
<dbReference type="EMBL" id="AK299191">
    <property type="protein sequence ID" value="BAH12965.1"/>
    <property type="molecule type" value="mRNA"/>
</dbReference>
<dbReference type="EMBL" id="AK302932">
    <property type="protein sequence ID" value="BAH13848.1"/>
    <property type="status" value="ALT_INIT"/>
    <property type="molecule type" value="mRNA"/>
</dbReference>
<dbReference type="EMBL" id="AF370419">
    <property type="protein sequence ID" value="AAQ15255.2"/>
    <property type="molecule type" value="mRNA"/>
</dbReference>
<dbReference type="EMBL" id="AC023545">
    <property type="status" value="NOT_ANNOTATED_CDS"/>
    <property type="molecule type" value="Genomic_DNA"/>
</dbReference>
<dbReference type="EMBL" id="CH471136">
    <property type="protein sequence ID" value="EAW99353.1"/>
    <property type="molecule type" value="Genomic_DNA"/>
</dbReference>
<dbReference type="EMBL" id="CH471136">
    <property type="protein sequence ID" value="EAW99356.1"/>
    <property type="molecule type" value="Genomic_DNA"/>
</dbReference>
<dbReference type="EMBL" id="BC015881">
    <property type="protein sequence ID" value="AAH15881.1"/>
    <property type="molecule type" value="mRNA"/>
</dbReference>
<dbReference type="EMBL" id="BC025256">
    <property type="protein sequence ID" value="AAH25256.1"/>
    <property type="molecule type" value="mRNA"/>
</dbReference>
<dbReference type="CCDS" id="CCDS10261.1">
    <molecule id="Q9BX79-1"/>
</dbReference>
<dbReference type="CCDS" id="CCDS45301.1">
    <molecule id="Q9BX79-3"/>
</dbReference>
<dbReference type="CCDS" id="CCDS45302.1">
    <molecule id="Q9BX79-2"/>
</dbReference>
<dbReference type="CCDS" id="CCDS55973.1">
    <molecule id="Q9BX79-4"/>
</dbReference>
<dbReference type="CCDS" id="CCDS55974.1">
    <molecule id="Q9BX79-5"/>
</dbReference>
<dbReference type="CCDS" id="CCDS58387.1">
    <molecule id="Q9BX79-6"/>
</dbReference>
<dbReference type="RefSeq" id="NP_001136089.1">
    <molecule id="Q9BX79-1"/>
    <property type="nucleotide sequence ID" value="NM_001142617.2"/>
</dbReference>
<dbReference type="RefSeq" id="NP_001136090.1">
    <molecule id="Q9BX79-1"/>
    <property type="nucleotide sequence ID" value="NM_001142618.2"/>
</dbReference>
<dbReference type="RefSeq" id="NP_001136091.1">
    <molecule id="Q9BX79-3"/>
    <property type="nucleotide sequence ID" value="NM_001142619.2"/>
</dbReference>
<dbReference type="RefSeq" id="NP_001136092.1">
    <molecule id="Q9BX79-2"/>
    <property type="nucleotide sequence ID" value="NM_001142620.2"/>
</dbReference>
<dbReference type="RefSeq" id="NP_001185969.1">
    <molecule id="Q9BX79-5"/>
    <property type="nucleotide sequence ID" value="NM_001199040.2"/>
</dbReference>
<dbReference type="RefSeq" id="NP_001185970.1">
    <molecule id="Q9BX79-6"/>
    <property type="nucleotide sequence ID" value="NM_001199041.2"/>
</dbReference>
<dbReference type="RefSeq" id="NP_001185971.1">
    <molecule id="Q9BX79-4"/>
    <property type="nucleotide sequence ID" value="NM_001199042.2"/>
</dbReference>
<dbReference type="RefSeq" id="NP_071764.3">
    <molecule id="Q9BX79-1"/>
    <property type="nucleotide sequence ID" value="NM_022369.3"/>
</dbReference>
<dbReference type="RefSeq" id="XP_011520185.1">
    <molecule id="Q9BX79-1"/>
    <property type="nucleotide sequence ID" value="XM_011521883.1"/>
</dbReference>
<dbReference type="RefSeq" id="XP_016877968.1">
    <molecule id="Q9BX79-1"/>
    <property type="nucleotide sequence ID" value="XM_017022479.2"/>
</dbReference>
<dbReference type="RefSeq" id="XP_054188524.1">
    <molecule id="Q9BX79-1"/>
    <property type="nucleotide sequence ID" value="XM_054332549.1"/>
</dbReference>
<dbReference type="RefSeq" id="XP_054188525.1">
    <molecule id="Q9BX79-1"/>
    <property type="nucleotide sequence ID" value="XM_054332550.1"/>
</dbReference>
<dbReference type="RefSeq" id="XP_054234580.1">
    <molecule id="Q9BX79-1"/>
    <property type="nucleotide sequence ID" value="XM_054378605.1"/>
</dbReference>
<dbReference type="RefSeq" id="XP_054234581.1">
    <molecule id="Q9BX79-1"/>
    <property type="nucleotide sequence ID" value="XM_054378606.1"/>
</dbReference>
<dbReference type="SMR" id="Q9BX79"/>
<dbReference type="BioGRID" id="122110">
    <property type="interactions" value="34"/>
</dbReference>
<dbReference type="FunCoup" id="Q9BX79">
    <property type="interactions" value="69"/>
</dbReference>
<dbReference type="IntAct" id="Q9BX79">
    <property type="interactions" value="16"/>
</dbReference>
<dbReference type="STRING" id="9606.ENSP00000456609"/>
<dbReference type="DrugBank" id="DB00162">
    <property type="generic name" value="Vitamin A"/>
</dbReference>
<dbReference type="TCDB" id="2.A.90.1.3">
    <property type="family name" value="the vitamin a receptor/transporter (stra6) family"/>
</dbReference>
<dbReference type="GlyCosmos" id="Q9BX79">
    <property type="glycosylation" value="1 site, No reported glycans"/>
</dbReference>
<dbReference type="GlyGen" id="Q9BX79">
    <property type="glycosylation" value="2 sites, 1 O-linked glycan (1 site)"/>
</dbReference>
<dbReference type="iPTMnet" id="Q9BX79"/>
<dbReference type="PhosphoSitePlus" id="Q9BX79"/>
<dbReference type="SwissPalm" id="Q9BX79"/>
<dbReference type="BioMuta" id="STRA6"/>
<dbReference type="DMDM" id="74733466"/>
<dbReference type="jPOST" id="Q9BX79"/>
<dbReference type="MassIVE" id="Q9BX79"/>
<dbReference type="PaxDb" id="9606-ENSP00000456609"/>
<dbReference type="PeptideAtlas" id="Q9BX79"/>
<dbReference type="ProteomicsDB" id="24753"/>
<dbReference type="ProteomicsDB" id="46637"/>
<dbReference type="ProteomicsDB" id="79375">
    <molecule id="Q9BX79-1"/>
</dbReference>
<dbReference type="ProteomicsDB" id="79376">
    <molecule id="Q9BX79-2"/>
</dbReference>
<dbReference type="ProteomicsDB" id="79377">
    <molecule id="Q9BX79-3"/>
</dbReference>
<dbReference type="ProteomicsDB" id="79378">
    <molecule id="Q9BX79-4"/>
</dbReference>
<dbReference type="Antibodypedia" id="26878">
    <property type="antibodies" value="256 antibodies from 31 providers"/>
</dbReference>
<dbReference type="DNASU" id="64220"/>
<dbReference type="Ensembl" id="ENST00000323940.9">
    <molecule id="Q9BX79-1"/>
    <property type="protein sequence ID" value="ENSP00000326085.5"/>
    <property type="gene ID" value="ENSG00000137868.19"/>
</dbReference>
<dbReference type="Ensembl" id="ENST00000395105.9">
    <molecule id="Q9BX79-1"/>
    <property type="protein sequence ID" value="ENSP00000378537.4"/>
    <property type="gene ID" value="ENSG00000137868.19"/>
</dbReference>
<dbReference type="Ensembl" id="ENST00000423167.6">
    <molecule id="Q9BX79-3"/>
    <property type="protein sequence ID" value="ENSP00000413012.2"/>
    <property type="gene ID" value="ENSG00000137868.19"/>
</dbReference>
<dbReference type="Ensembl" id="ENST00000432245.6">
    <molecule id="Q9BX79-2"/>
    <property type="protein sequence ID" value="ENSP00000407176.2"/>
    <property type="gene ID" value="ENSG00000137868.19"/>
</dbReference>
<dbReference type="Ensembl" id="ENST00000449139.6">
    <molecule id="Q9BX79-1"/>
    <property type="protein sequence ID" value="ENSP00000410221.2"/>
    <property type="gene ID" value="ENSG00000137868.19"/>
</dbReference>
<dbReference type="Ensembl" id="ENST00000535552.5">
    <molecule id="Q9BX79-5"/>
    <property type="protein sequence ID" value="ENSP00000440238.1"/>
    <property type="gene ID" value="ENSG00000137868.19"/>
</dbReference>
<dbReference type="Ensembl" id="ENST00000563965.5">
    <molecule id="Q9BX79-4"/>
    <property type="protein sequence ID" value="ENSP00000456609.1"/>
    <property type="gene ID" value="ENSG00000137868.19"/>
</dbReference>
<dbReference type="Ensembl" id="ENST00000574278.5">
    <molecule id="Q9BX79-6"/>
    <property type="protein sequence ID" value="ENSP00000458827.1"/>
    <property type="gene ID" value="ENSG00000137868.19"/>
</dbReference>
<dbReference type="Ensembl" id="ENST00000616000.4">
    <molecule id="Q9BX79-1"/>
    <property type="protein sequence ID" value="ENSP00000479112.1"/>
    <property type="gene ID" value="ENSG00000137868.19"/>
</dbReference>
<dbReference type="Ensembl" id="ENST00000672446.1">
    <molecule id="Q9BX79-3"/>
    <property type="protein sequence ID" value="ENSP00000500590.1"/>
    <property type="gene ID" value="ENSG00000288257.1"/>
</dbReference>
<dbReference type="Ensembl" id="ENST00000672526.1">
    <molecule id="Q9BX79-1"/>
    <property type="protein sequence ID" value="ENSP00000500345.1"/>
    <property type="gene ID" value="ENSG00000288257.1"/>
</dbReference>
<dbReference type="Ensembl" id="ENST00000672584.1">
    <molecule id="Q9BX79-1"/>
    <property type="protein sequence ID" value="ENSP00000499915.1"/>
    <property type="gene ID" value="ENSG00000288257.1"/>
</dbReference>
<dbReference type="Ensembl" id="ENST00000672836.1">
    <molecule id="Q9BX79-5"/>
    <property type="protein sequence ID" value="ENSP00000500033.1"/>
    <property type="gene ID" value="ENSG00000288257.1"/>
</dbReference>
<dbReference type="Ensembl" id="ENST00000673026.1">
    <molecule id="Q9BX79-1"/>
    <property type="protein sequence ID" value="ENSP00000499878.1"/>
    <property type="gene ID" value="ENSG00000288257.1"/>
</dbReference>
<dbReference type="Ensembl" id="ENST00000673039.1">
    <molecule id="Q9BX79-6"/>
    <property type="protein sequence ID" value="ENSP00000500335.1"/>
    <property type="gene ID" value="ENSG00000288257.1"/>
</dbReference>
<dbReference type="Ensembl" id="ENST00000673241.1">
    <molecule id="Q9BX79-4"/>
    <property type="protein sequence ID" value="ENSP00000499866.1"/>
    <property type="gene ID" value="ENSG00000288257.1"/>
</dbReference>
<dbReference type="Ensembl" id="ENST00000673414.1">
    <molecule id="Q9BX79-1"/>
    <property type="protein sequence ID" value="ENSP00000500241.1"/>
    <property type="gene ID" value="ENSG00000288257.1"/>
</dbReference>
<dbReference type="Ensembl" id="ENST00000673519.1">
    <molecule id="Q9BX79-2"/>
    <property type="protein sequence ID" value="ENSP00000500334.1"/>
    <property type="gene ID" value="ENSG00000288257.1"/>
</dbReference>
<dbReference type="GeneID" id="64220"/>
<dbReference type="KEGG" id="hsa:64220"/>
<dbReference type="MANE-Select" id="ENST00000395105.9">
    <property type="protein sequence ID" value="ENSP00000378537.4"/>
    <property type="RefSeq nucleotide sequence ID" value="NM_022369.4"/>
    <property type="RefSeq protein sequence ID" value="NP_071764.3"/>
</dbReference>
<dbReference type="UCSC" id="uc002axj.5">
    <molecule id="Q9BX79-1"/>
    <property type="organism name" value="human"/>
</dbReference>
<dbReference type="AGR" id="HGNC:30650"/>
<dbReference type="CTD" id="64220"/>
<dbReference type="DisGeNET" id="64220"/>
<dbReference type="GeneCards" id="STRA6"/>
<dbReference type="HGNC" id="HGNC:30650">
    <property type="gene designation" value="STRA6"/>
</dbReference>
<dbReference type="HPA" id="ENSG00000137868">
    <property type="expression patterns" value="Tissue enhanced (cervix)"/>
</dbReference>
<dbReference type="MalaCards" id="STRA6"/>
<dbReference type="MIM" id="601186">
    <property type="type" value="phenotype"/>
</dbReference>
<dbReference type="MIM" id="610745">
    <property type="type" value="gene"/>
</dbReference>
<dbReference type="neXtProt" id="NX_Q9BX79"/>
<dbReference type="OpenTargets" id="ENSG00000137868"/>
<dbReference type="Orphanet" id="98938">
    <property type="disease" value="Colobomatous microphthalmia"/>
</dbReference>
<dbReference type="Orphanet" id="2470">
    <property type="disease" value="Matthew-Wood syndrome"/>
</dbReference>
<dbReference type="PharmGKB" id="PA134956551"/>
<dbReference type="VEuPathDB" id="HostDB:ENSG00000137868"/>
<dbReference type="eggNOG" id="ENOG502QRSS">
    <property type="taxonomic scope" value="Eukaryota"/>
</dbReference>
<dbReference type="GeneTree" id="ENSGT00940000153246"/>
<dbReference type="HOGENOM" id="CLU_1639302_0_0_1"/>
<dbReference type="InParanoid" id="Q9BX79"/>
<dbReference type="OrthoDB" id="9939815at2759"/>
<dbReference type="PAN-GO" id="Q9BX79">
    <property type="GO annotations" value="2 GO annotations based on evolutionary models"/>
</dbReference>
<dbReference type="PhylomeDB" id="Q9BX79"/>
<dbReference type="TreeFam" id="TF331851"/>
<dbReference type="PathwayCommons" id="Q9BX79"/>
<dbReference type="Reactome" id="R-HSA-2453902">
    <property type="pathway name" value="The canonical retinoid cycle in rods (twilight vision)"/>
</dbReference>
<dbReference type="Reactome" id="R-HSA-9918449">
    <property type="pathway name" value="Defective visual phototransduction due to STRA6 loss of function"/>
</dbReference>
<dbReference type="SignaLink" id="Q9BX79"/>
<dbReference type="SIGNOR" id="Q9BX79"/>
<dbReference type="BioGRID-ORCS" id="64220">
    <property type="hits" value="13 hits in 1144 CRISPR screens"/>
</dbReference>
<dbReference type="ChiTaRS" id="STRA6">
    <property type="organism name" value="human"/>
</dbReference>
<dbReference type="GenomeRNAi" id="64220"/>
<dbReference type="Pharos" id="Q9BX79">
    <property type="development level" value="Tbio"/>
</dbReference>
<dbReference type="PRO" id="PR:Q9BX79"/>
<dbReference type="Proteomes" id="UP000005640">
    <property type="component" value="Chromosome 15"/>
</dbReference>
<dbReference type="RNAct" id="Q9BX79">
    <property type="molecule type" value="protein"/>
</dbReference>
<dbReference type="Bgee" id="ENSG00000137868">
    <property type="expression patterns" value="Expressed in stromal cell of endometrium and 96 other cell types or tissues"/>
</dbReference>
<dbReference type="ExpressionAtlas" id="Q9BX79">
    <property type="expression patterns" value="baseline and differential"/>
</dbReference>
<dbReference type="GO" id="GO:0005886">
    <property type="term" value="C:plasma membrane"/>
    <property type="evidence" value="ECO:0000314"/>
    <property type="project" value="UniProtKB"/>
</dbReference>
<dbReference type="GO" id="GO:0032991">
    <property type="term" value="C:protein-containing complex"/>
    <property type="evidence" value="ECO:0000314"/>
    <property type="project" value="LIFEdb"/>
</dbReference>
<dbReference type="GO" id="GO:0016918">
    <property type="term" value="F:retinal binding"/>
    <property type="evidence" value="ECO:0007669"/>
    <property type="project" value="UniProtKB-KW"/>
</dbReference>
<dbReference type="GO" id="GO:0019841">
    <property type="term" value="F:retinol binding"/>
    <property type="evidence" value="ECO:0007669"/>
    <property type="project" value="UniProtKB-KW"/>
</dbReference>
<dbReference type="GO" id="GO:0034632">
    <property type="term" value="F:retinol transmembrane transporter activity"/>
    <property type="evidence" value="ECO:0000314"/>
    <property type="project" value="UniProtKB"/>
</dbReference>
<dbReference type="GO" id="GO:0038023">
    <property type="term" value="F:signaling receptor activity"/>
    <property type="evidence" value="ECO:0007669"/>
    <property type="project" value="InterPro"/>
</dbReference>
<dbReference type="GO" id="GO:0030325">
    <property type="term" value="P:adrenal gland development"/>
    <property type="evidence" value="ECO:0000315"/>
    <property type="project" value="DFLAT"/>
</dbReference>
<dbReference type="GO" id="GO:0061143">
    <property type="term" value="P:alveolar primary septum development"/>
    <property type="evidence" value="ECO:0000315"/>
    <property type="project" value="DFLAT"/>
</dbReference>
<dbReference type="GO" id="GO:0048844">
    <property type="term" value="P:artery morphogenesis"/>
    <property type="evidence" value="ECO:0000315"/>
    <property type="project" value="DFLAT"/>
</dbReference>
<dbReference type="GO" id="GO:0001568">
    <property type="term" value="P:blood vessel development"/>
    <property type="evidence" value="ECO:0000315"/>
    <property type="project" value="DFLAT"/>
</dbReference>
<dbReference type="GO" id="GO:0043010">
    <property type="term" value="P:camera-type eye development"/>
    <property type="evidence" value="ECO:0000315"/>
    <property type="project" value="UniProtKB"/>
</dbReference>
<dbReference type="GO" id="GO:0050890">
    <property type="term" value="P:cognition"/>
    <property type="evidence" value="ECO:0000315"/>
    <property type="project" value="DFLAT"/>
</dbReference>
<dbReference type="GO" id="GO:0048589">
    <property type="term" value="P:developmental growth"/>
    <property type="evidence" value="ECO:0000315"/>
    <property type="project" value="DFLAT"/>
</dbReference>
<dbReference type="GO" id="GO:0060539">
    <property type="term" value="P:diaphragm development"/>
    <property type="evidence" value="ECO:0000315"/>
    <property type="project" value="DFLAT"/>
</dbReference>
<dbReference type="GO" id="GO:0048546">
    <property type="term" value="P:digestive tract morphogenesis"/>
    <property type="evidence" value="ECO:0000315"/>
    <property type="project" value="DFLAT"/>
</dbReference>
<dbReference type="GO" id="GO:0097070">
    <property type="term" value="P:ductus arteriosus closure"/>
    <property type="evidence" value="ECO:0000315"/>
    <property type="project" value="DFLAT"/>
</dbReference>
<dbReference type="GO" id="GO:0043583">
    <property type="term" value="P:ear development"/>
    <property type="evidence" value="ECO:0000315"/>
    <property type="project" value="DFLAT"/>
</dbReference>
<dbReference type="GO" id="GO:0060900">
    <property type="term" value="P:embryonic camera-type eye formation"/>
    <property type="evidence" value="ECO:0000315"/>
    <property type="project" value="DFLAT"/>
</dbReference>
<dbReference type="GO" id="GO:0048566">
    <property type="term" value="P:embryonic digestive tract development"/>
    <property type="evidence" value="ECO:0000315"/>
    <property type="project" value="DFLAT"/>
</dbReference>
<dbReference type="GO" id="GO:0061029">
    <property type="term" value="P:eyelid development in camera-type eye"/>
    <property type="evidence" value="ECO:0000315"/>
    <property type="project" value="DFLAT"/>
</dbReference>
<dbReference type="GO" id="GO:0060325">
    <property type="term" value="P:face morphogenesis"/>
    <property type="evidence" value="ECO:0000315"/>
    <property type="project" value="DFLAT"/>
</dbReference>
<dbReference type="GO" id="GO:0007631">
    <property type="term" value="P:feeding behavior"/>
    <property type="evidence" value="ECO:0000315"/>
    <property type="project" value="DFLAT"/>
</dbReference>
<dbReference type="GO" id="GO:0030540">
    <property type="term" value="P:female genitalia development"/>
    <property type="evidence" value="ECO:0000315"/>
    <property type="project" value="DFLAT"/>
</dbReference>
<dbReference type="GO" id="GO:0060322">
    <property type="term" value="P:head development"/>
    <property type="evidence" value="ECO:0000315"/>
    <property type="project" value="DFLAT"/>
</dbReference>
<dbReference type="GO" id="GO:0060323">
    <property type="term" value="P:head morphogenesis"/>
    <property type="evidence" value="ECO:0000315"/>
    <property type="project" value="DFLAT"/>
</dbReference>
<dbReference type="GO" id="GO:0007507">
    <property type="term" value="P:heart development"/>
    <property type="evidence" value="ECO:0000315"/>
    <property type="project" value="DFLAT"/>
</dbReference>
<dbReference type="GO" id="GO:0001822">
    <property type="term" value="P:kidney development"/>
    <property type="evidence" value="ECO:0000315"/>
    <property type="project" value="DFLAT"/>
</dbReference>
<dbReference type="GO" id="GO:0007612">
    <property type="term" value="P:learning"/>
    <property type="evidence" value="ECO:0000315"/>
    <property type="project" value="DFLAT"/>
</dbReference>
<dbReference type="GO" id="GO:0048286">
    <property type="term" value="P:lung alveolus development"/>
    <property type="evidence" value="ECO:0000315"/>
    <property type="project" value="DFLAT"/>
</dbReference>
<dbReference type="GO" id="GO:0030324">
    <property type="term" value="P:lung development"/>
    <property type="evidence" value="ECO:0000315"/>
    <property type="project" value="DFLAT"/>
</dbReference>
<dbReference type="GO" id="GO:0060426">
    <property type="term" value="P:lung vasculature development"/>
    <property type="evidence" value="ECO:0000315"/>
    <property type="project" value="DFLAT"/>
</dbReference>
<dbReference type="GO" id="GO:0050905">
    <property type="term" value="P:neuromuscular process"/>
    <property type="evidence" value="ECO:0000315"/>
    <property type="project" value="DFLAT"/>
</dbReference>
<dbReference type="GO" id="GO:0043585">
    <property type="term" value="P:nose morphogenesis"/>
    <property type="evidence" value="ECO:0000315"/>
    <property type="project" value="DFLAT"/>
</dbReference>
<dbReference type="GO" id="GO:0061205">
    <property type="term" value="P:paramesonephric duct development"/>
    <property type="evidence" value="ECO:0000315"/>
    <property type="project" value="DFLAT"/>
</dbReference>
<dbReference type="GO" id="GO:0048520">
    <property type="term" value="P:positive regulation of behavior"/>
    <property type="evidence" value="ECO:0000315"/>
    <property type="project" value="DFLAT"/>
</dbReference>
<dbReference type="GO" id="GO:0061156">
    <property type="term" value="P:pulmonary artery morphogenesis"/>
    <property type="evidence" value="ECO:0000315"/>
    <property type="project" value="DFLAT"/>
</dbReference>
<dbReference type="GO" id="GO:0003184">
    <property type="term" value="P:pulmonary valve morphogenesis"/>
    <property type="evidence" value="ECO:0000315"/>
    <property type="project" value="DFLAT"/>
</dbReference>
<dbReference type="GO" id="GO:0034633">
    <property type="term" value="P:retinol transport"/>
    <property type="evidence" value="ECO:0000314"/>
    <property type="project" value="UniProtKB"/>
</dbReference>
<dbReference type="GO" id="GO:0048745">
    <property type="term" value="P:smooth muscle tissue development"/>
    <property type="evidence" value="ECO:0000315"/>
    <property type="project" value="DFLAT"/>
</dbReference>
<dbReference type="GO" id="GO:0061038">
    <property type="term" value="P:uterus morphogenesis"/>
    <property type="evidence" value="ECO:0000315"/>
    <property type="project" value="DFLAT"/>
</dbReference>
<dbReference type="GO" id="GO:0003281">
    <property type="term" value="P:ventricular septum development"/>
    <property type="evidence" value="ECO:0000315"/>
    <property type="project" value="DFLAT"/>
</dbReference>
<dbReference type="GO" id="GO:0071939">
    <property type="term" value="P:vitamin A import into cell"/>
    <property type="evidence" value="ECO:0000318"/>
    <property type="project" value="GO_Central"/>
</dbReference>
<dbReference type="GO" id="GO:0042297">
    <property type="term" value="P:vocal learning"/>
    <property type="evidence" value="ECO:0000315"/>
    <property type="project" value="DFLAT"/>
</dbReference>
<dbReference type="InterPro" id="IPR026612">
    <property type="entry name" value="STRA6-like"/>
</dbReference>
<dbReference type="PANTHER" id="PTHR21444">
    <property type="entry name" value="COILED-COIL DOMAIN-CONTAINING PROTEIN 180"/>
    <property type="match status" value="1"/>
</dbReference>
<dbReference type="PANTHER" id="PTHR21444:SF16">
    <property type="entry name" value="RECEPTOR FOR RETINOL UPTAKE STRA6"/>
    <property type="match status" value="1"/>
</dbReference>
<dbReference type="Pfam" id="PF14752">
    <property type="entry name" value="RBP_receptor"/>
    <property type="match status" value="1"/>
</dbReference>